<gene>
    <name evidence="1" type="primary">glpK</name>
    <name type="ordered locus">M6_Spy1429</name>
</gene>
<feature type="chain" id="PRO_0000059509" description="Glycerol kinase">
    <location>
        <begin position="1"/>
        <end position="504"/>
    </location>
</feature>
<feature type="binding site" evidence="1">
    <location>
        <position position="14"/>
    </location>
    <ligand>
        <name>ADP</name>
        <dbReference type="ChEBI" id="CHEBI:456216"/>
    </ligand>
</feature>
<feature type="binding site" evidence="1">
    <location>
        <position position="14"/>
    </location>
    <ligand>
        <name>ATP</name>
        <dbReference type="ChEBI" id="CHEBI:30616"/>
    </ligand>
</feature>
<feature type="binding site" evidence="1">
    <location>
        <position position="14"/>
    </location>
    <ligand>
        <name>sn-glycerol 3-phosphate</name>
        <dbReference type="ChEBI" id="CHEBI:57597"/>
    </ligand>
</feature>
<feature type="binding site" evidence="1">
    <location>
        <position position="15"/>
    </location>
    <ligand>
        <name>ATP</name>
        <dbReference type="ChEBI" id="CHEBI:30616"/>
    </ligand>
</feature>
<feature type="binding site" evidence="1">
    <location>
        <position position="16"/>
    </location>
    <ligand>
        <name>ATP</name>
        <dbReference type="ChEBI" id="CHEBI:30616"/>
    </ligand>
</feature>
<feature type="binding site" evidence="1">
    <location>
        <position position="18"/>
    </location>
    <ligand>
        <name>ADP</name>
        <dbReference type="ChEBI" id="CHEBI:456216"/>
    </ligand>
</feature>
<feature type="binding site" evidence="1">
    <location>
        <position position="84"/>
    </location>
    <ligand>
        <name>glycerol</name>
        <dbReference type="ChEBI" id="CHEBI:17754"/>
    </ligand>
</feature>
<feature type="binding site" evidence="1">
    <location>
        <position position="84"/>
    </location>
    <ligand>
        <name>sn-glycerol 3-phosphate</name>
        <dbReference type="ChEBI" id="CHEBI:57597"/>
    </ligand>
</feature>
<feature type="binding site" evidence="1">
    <location>
        <position position="85"/>
    </location>
    <ligand>
        <name>glycerol</name>
        <dbReference type="ChEBI" id="CHEBI:17754"/>
    </ligand>
</feature>
<feature type="binding site" evidence="1">
    <location>
        <position position="85"/>
    </location>
    <ligand>
        <name>sn-glycerol 3-phosphate</name>
        <dbReference type="ChEBI" id="CHEBI:57597"/>
    </ligand>
</feature>
<feature type="binding site" evidence="1">
    <location>
        <position position="136"/>
    </location>
    <ligand>
        <name>glycerol</name>
        <dbReference type="ChEBI" id="CHEBI:17754"/>
    </ligand>
</feature>
<feature type="binding site" evidence="1">
    <location>
        <position position="136"/>
    </location>
    <ligand>
        <name>sn-glycerol 3-phosphate</name>
        <dbReference type="ChEBI" id="CHEBI:57597"/>
    </ligand>
</feature>
<feature type="binding site" evidence="1">
    <location>
        <position position="246"/>
    </location>
    <ligand>
        <name>glycerol</name>
        <dbReference type="ChEBI" id="CHEBI:17754"/>
    </ligand>
</feature>
<feature type="binding site" evidence="1">
    <location>
        <position position="246"/>
    </location>
    <ligand>
        <name>sn-glycerol 3-phosphate</name>
        <dbReference type="ChEBI" id="CHEBI:57597"/>
    </ligand>
</feature>
<feature type="binding site" evidence="1">
    <location>
        <position position="247"/>
    </location>
    <ligand>
        <name>glycerol</name>
        <dbReference type="ChEBI" id="CHEBI:17754"/>
    </ligand>
</feature>
<feature type="binding site" evidence="1">
    <location>
        <position position="268"/>
    </location>
    <ligand>
        <name>ADP</name>
        <dbReference type="ChEBI" id="CHEBI:456216"/>
    </ligand>
</feature>
<feature type="binding site" evidence="1">
    <location>
        <position position="268"/>
    </location>
    <ligand>
        <name>ATP</name>
        <dbReference type="ChEBI" id="CHEBI:30616"/>
    </ligand>
</feature>
<feature type="binding site" evidence="1">
    <location>
        <position position="311"/>
    </location>
    <ligand>
        <name>ADP</name>
        <dbReference type="ChEBI" id="CHEBI:456216"/>
    </ligand>
</feature>
<feature type="binding site" evidence="1">
    <location>
        <position position="311"/>
    </location>
    <ligand>
        <name>ATP</name>
        <dbReference type="ChEBI" id="CHEBI:30616"/>
    </ligand>
</feature>
<feature type="binding site" evidence="1">
    <location>
        <position position="315"/>
    </location>
    <ligand>
        <name>ATP</name>
        <dbReference type="ChEBI" id="CHEBI:30616"/>
    </ligand>
</feature>
<feature type="binding site" evidence="1">
    <location>
        <position position="412"/>
    </location>
    <ligand>
        <name>ADP</name>
        <dbReference type="ChEBI" id="CHEBI:456216"/>
    </ligand>
</feature>
<feature type="binding site" evidence="1">
    <location>
        <position position="412"/>
    </location>
    <ligand>
        <name>ATP</name>
        <dbReference type="ChEBI" id="CHEBI:30616"/>
    </ligand>
</feature>
<feature type="binding site" evidence="1">
    <location>
        <position position="416"/>
    </location>
    <ligand>
        <name>ADP</name>
        <dbReference type="ChEBI" id="CHEBI:456216"/>
    </ligand>
</feature>
<feature type="modified residue" description="Phosphohistidine; by HPr" evidence="1">
    <location>
        <position position="232"/>
    </location>
</feature>
<name>GLPK_STRP6</name>
<reference key="1">
    <citation type="journal article" date="2004" name="J. Infect. Dis.">
        <title>Progress toward characterization of the group A Streptococcus metagenome: complete genome sequence of a macrolide-resistant serotype M6 strain.</title>
        <authorList>
            <person name="Banks D.J."/>
            <person name="Porcella S.F."/>
            <person name="Barbian K.D."/>
            <person name="Beres S.B."/>
            <person name="Philips L.E."/>
            <person name="Voyich J.M."/>
            <person name="DeLeo F.R."/>
            <person name="Martin J.M."/>
            <person name="Somerville G.A."/>
            <person name="Musser J.M."/>
        </authorList>
    </citation>
    <scope>NUCLEOTIDE SEQUENCE [LARGE SCALE GENOMIC DNA]</scope>
    <source>
        <strain>ATCC BAA-946 / MGAS10394</strain>
    </source>
</reference>
<comment type="function">
    <text evidence="1">Key enzyme in the regulation of glycerol uptake and metabolism. Catalyzes the phosphorylation of glycerol to yield sn-glycerol 3-phosphate.</text>
</comment>
<comment type="catalytic activity">
    <reaction evidence="1">
        <text>glycerol + ATP = sn-glycerol 3-phosphate + ADP + H(+)</text>
        <dbReference type="Rhea" id="RHEA:21644"/>
        <dbReference type="ChEBI" id="CHEBI:15378"/>
        <dbReference type="ChEBI" id="CHEBI:17754"/>
        <dbReference type="ChEBI" id="CHEBI:30616"/>
        <dbReference type="ChEBI" id="CHEBI:57597"/>
        <dbReference type="ChEBI" id="CHEBI:456216"/>
        <dbReference type="EC" id="2.7.1.30"/>
    </reaction>
</comment>
<comment type="activity regulation">
    <text evidence="1">Activated by phosphorylation and inhibited by fructose 1,6-bisphosphate (FBP).</text>
</comment>
<comment type="pathway">
    <text evidence="1">Polyol metabolism; glycerol degradation via glycerol kinase pathway; sn-glycerol 3-phosphate from glycerol: step 1/1.</text>
</comment>
<comment type="subunit">
    <text evidence="1">Homotetramer and homodimer (in equilibrium).</text>
</comment>
<comment type="PTM">
    <text evidence="1">The phosphoenolpyruvate-dependent sugar phosphotransferase system (PTS), including enzyme I, and histidine-containing protein (HPr) are required for the phosphorylation, which leads to the activation of the enzyme.</text>
</comment>
<comment type="similarity">
    <text evidence="1">Belongs to the FGGY kinase family.</text>
</comment>
<accession>Q5XAJ9</accession>
<protein>
    <recommendedName>
        <fullName evidence="1">Glycerol kinase</fullName>
        <ecNumber evidence="1">2.7.1.30</ecNumber>
    </recommendedName>
    <alternativeName>
        <fullName evidence="1">ATP:glycerol 3-phosphotransferase</fullName>
    </alternativeName>
    <alternativeName>
        <fullName evidence="1">Glycerokinase</fullName>
        <shortName evidence="1">GK</shortName>
    </alternativeName>
</protein>
<dbReference type="EC" id="2.7.1.30" evidence="1"/>
<dbReference type="EMBL" id="CP000003">
    <property type="protein sequence ID" value="AAT87564.1"/>
    <property type="molecule type" value="Genomic_DNA"/>
</dbReference>
<dbReference type="RefSeq" id="WP_011184847.1">
    <property type="nucleotide sequence ID" value="NC_006086.1"/>
</dbReference>
<dbReference type="SMR" id="Q5XAJ9"/>
<dbReference type="KEGG" id="spa:M6_Spy1429"/>
<dbReference type="HOGENOM" id="CLU_009281_2_3_9"/>
<dbReference type="UniPathway" id="UPA00618">
    <property type="reaction ID" value="UER00672"/>
</dbReference>
<dbReference type="Proteomes" id="UP000001167">
    <property type="component" value="Chromosome"/>
</dbReference>
<dbReference type="GO" id="GO:0005829">
    <property type="term" value="C:cytosol"/>
    <property type="evidence" value="ECO:0007669"/>
    <property type="project" value="TreeGrafter"/>
</dbReference>
<dbReference type="GO" id="GO:0005524">
    <property type="term" value="F:ATP binding"/>
    <property type="evidence" value="ECO:0007669"/>
    <property type="project" value="UniProtKB-UniRule"/>
</dbReference>
<dbReference type="GO" id="GO:0004370">
    <property type="term" value="F:glycerol kinase activity"/>
    <property type="evidence" value="ECO:0000250"/>
    <property type="project" value="UniProtKB"/>
</dbReference>
<dbReference type="GO" id="GO:0019563">
    <property type="term" value="P:glycerol catabolic process"/>
    <property type="evidence" value="ECO:0007669"/>
    <property type="project" value="UniProtKB-UniRule"/>
</dbReference>
<dbReference type="GO" id="GO:0006071">
    <property type="term" value="P:glycerol metabolic process"/>
    <property type="evidence" value="ECO:0000250"/>
    <property type="project" value="UniProtKB"/>
</dbReference>
<dbReference type="GO" id="GO:0006072">
    <property type="term" value="P:glycerol-3-phosphate metabolic process"/>
    <property type="evidence" value="ECO:0007669"/>
    <property type="project" value="InterPro"/>
</dbReference>
<dbReference type="CDD" id="cd07786">
    <property type="entry name" value="FGGY_EcGK_like"/>
    <property type="match status" value="1"/>
</dbReference>
<dbReference type="FunFam" id="3.30.420.40:FF:000007">
    <property type="entry name" value="Glycerol kinase"/>
    <property type="match status" value="1"/>
</dbReference>
<dbReference type="FunFam" id="3.30.420.40:FF:000008">
    <property type="entry name" value="Glycerol kinase"/>
    <property type="match status" value="1"/>
</dbReference>
<dbReference type="Gene3D" id="3.30.420.40">
    <property type="match status" value="2"/>
</dbReference>
<dbReference type="HAMAP" id="MF_00186">
    <property type="entry name" value="Glycerol_kin"/>
    <property type="match status" value="1"/>
</dbReference>
<dbReference type="InterPro" id="IPR043129">
    <property type="entry name" value="ATPase_NBD"/>
</dbReference>
<dbReference type="InterPro" id="IPR000577">
    <property type="entry name" value="Carb_kinase_FGGY"/>
</dbReference>
<dbReference type="InterPro" id="IPR018483">
    <property type="entry name" value="Carb_kinase_FGGY_CS"/>
</dbReference>
<dbReference type="InterPro" id="IPR018485">
    <property type="entry name" value="FGGY_C"/>
</dbReference>
<dbReference type="InterPro" id="IPR018484">
    <property type="entry name" value="FGGY_N"/>
</dbReference>
<dbReference type="InterPro" id="IPR005999">
    <property type="entry name" value="Glycerol_kin"/>
</dbReference>
<dbReference type="NCBIfam" id="TIGR01311">
    <property type="entry name" value="glycerol_kin"/>
    <property type="match status" value="1"/>
</dbReference>
<dbReference type="NCBIfam" id="NF000756">
    <property type="entry name" value="PRK00047.1"/>
    <property type="match status" value="1"/>
</dbReference>
<dbReference type="PANTHER" id="PTHR10196:SF69">
    <property type="entry name" value="GLYCEROL KINASE"/>
    <property type="match status" value="1"/>
</dbReference>
<dbReference type="PANTHER" id="PTHR10196">
    <property type="entry name" value="SUGAR KINASE"/>
    <property type="match status" value="1"/>
</dbReference>
<dbReference type="Pfam" id="PF02782">
    <property type="entry name" value="FGGY_C"/>
    <property type="match status" value="1"/>
</dbReference>
<dbReference type="Pfam" id="PF00370">
    <property type="entry name" value="FGGY_N"/>
    <property type="match status" value="1"/>
</dbReference>
<dbReference type="PIRSF" id="PIRSF000538">
    <property type="entry name" value="GlpK"/>
    <property type="match status" value="1"/>
</dbReference>
<dbReference type="SUPFAM" id="SSF53067">
    <property type="entry name" value="Actin-like ATPase domain"/>
    <property type="match status" value="2"/>
</dbReference>
<dbReference type="PROSITE" id="PS00933">
    <property type="entry name" value="FGGY_KINASES_1"/>
    <property type="match status" value="1"/>
</dbReference>
<dbReference type="PROSITE" id="PS00445">
    <property type="entry name" value="FGGY_KINASES_2"/>
    <property type="match status" value="1"/>
</dbReference>
<proteinExistence type="inferred from homology"/>
<keyword id="KW-0067">ATP-binding</keyword>
<keyword id="KW-0319">Glycerol metabolism</keyword>
<keyword id="KW-0418">Kinase</keyword>
<keyword id="KW-0547">Nucleotide-binding</keyword>
<keyword id="KW-0597">Phosphoprotein</keyword>
<keyword id="KW-0808">Transferase</keyword>
<evidence type="ECO:0000255" key="1">
    <source>
        <dbReference type="HAMAP-Rule" id="MF_00186"/>
    </source>
</evidence>
<sequence length="504" mass="55596">MSQEKYIMAIDQGTTSSRAIIFNQKGEKVSSSQKEFPQIFPHAGWVEHNANQIWNSVQSVIAGAFIESSIKPSQIEAIGITNQRETTVVWDKKTGVPIYNAIVWQSRQTAPIAEQLKQDGHTKMIHEKTGLVIDAYFSATKIRWILDHVPGAQERAEKGELLFGTIDTWLVWKLTDGAVHVTDYSNAARTMLYNIKDLTWDDEILELLNIPKDMLPEVKSNSEIYGKTAAFHFYGGEVPISGMAGDQQAALFGQLAFDPGMVKNTYGTGSFIIMNTGDEMQLSSNNLLTTIGYGINGKVHYALEGSIFIAGSAIQWLRDGLKMIETSPESEQFALASTSDDEVYVVPAFTGLGAPYWDSNARGSVFGLTRGTSKEDFVKATLQSIAYQVRDVIDTMQVDSGIDIQQLRVDGGAAMNNMLMQFQADILGIDIARAKNLETTALGAAFLAGLAVGYWEDMDALKELNATGQLFKASMNESRKEKLYKGWKRAVKATQVFTQDDDAE</sequence>
<organism>
    <name type="scientific">Streptococcus pyogenes serotype M6 (strain ATCC BAA-946 / MGAS10394)</name>
    <dbReference type="NCBI Taxonomy" id="286636"/>
    <lineage>
        <taxon>Bacteria</taxon>
        <taxon>Bacillati</taxon>
        <taxon>Bacillota</taxon>
        <taxon>Bacilli</taxon>
        <taxon>Lactobacillales</taxon>
        <taxon>Streptococcaceae</taxon>
        <taxon>Streptococcus</taxon>
    </lineage>
</organism>